<proteinExistence type="inferred from homology"/>
<accession>Q7M9M5</accession>
<gene>
    <name evidence="1" type="primary">mnmG</name>
    <name evidence="1" type="synonym">gidA</name>
    <name type="ordered locus">WS0815</name>
</gene>
<dbReference type="EMBL" id="BX571659">
    <property type="protein sequence ID" value="CAE09928.1"/>
    <property type="molecule type" value="Genomic_DNA"/>
</dbReference>
<dbReference type="RefSeq" id="WP_011138725.1">
    <property type="nucleotide sequence ID" value="NC_005090.1"/>
</dbReference>
<dbReference type="SMR" id="Q7M9M5"/>
<dbReference type="STRING" id="273121.WS0815"/>
<dbReference type="KEGG" id="wsu:WS0815"/>
<dbReference type="eggNOG" id="COG0445">
    <property type="taxonomic scope" value="Bacteria"/>
</dbReference>
<dbReference type="HOGENOM" id="CLU_007831_2_2_7"/>
<dbReference type="Proteomes" id="UP000000422">
    <property type="component" value="Chromosome"/>
</dbReference>
<dbReference type="GO" id="GO:0005829">
    <property type="term" value="C:cytosol"/>
    <property type="evidence" value="ECO:0007669"/>
    <property type="project" value="TreeGrafter"/>
</dbReference>
<dbReference type="GO" id="GO:0050660">
    <property type="term" value="F:flavin adenine dinucleotide binding"/>
    <property type="evidence" value="ECO:0007669"/>
    <property type="project" value="UniProtKB-UniRule"/>
</dbReference>
<dbReference type="GO" id="GO:0030488">
    <property type="term" value="P:tRNA methylation"/>
    <property type="evidence" value="ECO:0007669"/>
    <property type="project" value="TreeGrafter"/>
</dbReference>
<dbReference type="GO" id="GO:0002098">
    <property type="term" value="P:tRNA wobble uridine modification"/>
    <property type="evidence" value="ECO:0007669"/>
    <property type="project" value="InterPro"/>
</dbReference>
<dbReference type="FunFam" id="1.10.150.570:FF:000001">
    <property type="entry name" value="tRNA uridine 5-carboxymethylaminomethyl modification enzyme MnmG"/>
    <property type="match status" value="1"/>
</dbReference>
<dbReference type="FunFam" id="3.50.50.60:FF:000002">
    <property type="entry name" value="tRNA uridine 5-carboxymethylaminomethyl modification enzyme MnmG"/>
    <property type="match status" value="1"/>
</dbReference>
<dbReference type="Gene3D" id="3.50.50.60">
    <property type="entry name" value="FAD/NAD(P)-binding domain"/>
    <property type="match status" value="2"/>
</dbReference>
<dbReference type="Gene3D" id="1.10.150.570">
    <property type="entry name" value="GidA associated domain, C-terminal subdomain"/>
    <property type="match status" value="1"/>
</dbReference>
<dbReference type="Gene3D" id="1.10.10.1800">
    <property type="entry name" value="tRNA uridine 5-carboxymethylaminomethyl modification enzyme MnmG/GidA"/>
    <property type="match status" value="1"/>
</dbReference>
<dbReference type="HAMAP" id="MF_00129">
    <property type="entry name" value="MnmG_GidA"/>
    <property type="match status" value="1"/>
</dbReference>
<dbReference type="InterPro" id="IPR036188">
    <property type="entry name" value="FAD/NAD-bd_sf"/>
</dbReference>
<dbReference type="InterPro" id="IPR049312">
    <property type="entry name" value="GIDA_C_N"/>
</dbReference>
<dbReference type="InterPro" id="IPR004416">
    <property type="entry name" value="MnmG"/>
</dbReference>
<dbReference type="InterPro" id="IPR002218">
    <property type="entry name" value="MnmG-rel"/>
</dbReference>
<dbReference type="InterPro" id="IPR020595">
    <property type="entry name" value="MnmG-rel_CS"/>
</dbReference>
<dbReference type="InterPro" id="IPR026904">
    <property type="entry name" value="MnmG_C"/>
</dbReference>
<dbReference type="InterPro" id="IPR047001">
    <property type="entry name" value="MnmG_C_subdom"/>
</dbReference>
<dbReference type="InterPro" id="IPR044920">
    <property type="entry name" value="MnmG_C_subdom_sf"/>
</dbReference>
<dbReference type="InterPro" id="IPR040131">
    <property type="entry name" value="MnmG_N"/>
</dbReference>
<dbReference type="NCBIfam" id="TIGR00136">
    <property type="entry name" value="mnmG_gidA"/>
    <property type="match status" value="1"/>
</dbReference>
<dbReference type="PANTHER" id="PTHR11806">
    <property type="entry name" value="GLUCOSE INHIBITED DIVISION PROTEIN A"/>
    <property type="match status" value="1"/>
</dbReference>
<dbReference type="PANTHER" id="PTHR11806:SF0">
    <property type="entry name" value="PROTEIN MTO1 HOMOLOG, MITOCHONDRIAL"/>
    <property type="match status" value="1"/>
</dbReference>
<dbReference type="Pfam" id="PF01134">
    <property type="entry name" value="GIDA"/>
    <property type="match status" value="1"/>
</dbReference>
<dbReference type="Pfam" id="PF21680">
    <property type="entry name" value="GIDA_C_1st"/>
    <property type="match status" value="1"/>
</dbReference>
<dbReference type="Pfam" id="PF13932">
    <property type="entry name" value="SAM_GIDA_C"/>
    <property type="match status" value="1"/>
</dbReference>
<dbReference type="SMART" id="SM01228">
    <property type="entry name" value="GIDA_assoc_3"/>
    <property type="match status" value="1"/>
</dbReference>
<dbReference type="SUPFAM" id="SSF51905">
    <property type="entry name" value="FAD/NAD(P)-binding domain"/>
    <property type="match status" value="1"/>
</dbReference>
<dbReference type="PROSITE" id="PS01280">
    <property type="entry name" value="GIDA_1"/>
    <property type="match status" value="1"/>
</dbReference>
<dbReference type="PROSITE" id="PS01281">
    <property type="entry name" value="GIDA_2"/>
    <property type="match status" value="1"/>
</dbReference>
<comment type="function">
    <text evidence="1">NAD-binding protein involved in the addition of a carboxymethylaminomethyl (cmnm) group at the wobble position (U34) of certain tRNAs, forming tRNA-cmnm(5)s(2)U34.</text>
</comment>
<comment type="cofactor">
    <cofactor evidence="1">
        <name>FAD</name>
        <dbReference type="ChEBI" id="CHEBI:57692"/>
    </cofactor>
</comment>
<comment type="subunit">
    <text evidence="1">Homodimer. Heterotetramer of two MnmE and two MnmG subunits.</text>
</comment>
<comment type="subcellular location">
    <subcellularLocation>
        <location evidence="1">Cytoplasm</location>
    </subcellularLocation>
</comment>
<comment type="similarity">
    <text evidence="1">Belongs to the MnmG family.</text>
</comment>
<organism>
    <name type="scientific">Wolinella succinogenes (strain ATCC 29543 / DSM 1740 / CCUG 13145 / JCM 31913 / LMG 7466 / NCTC 11488 / FDC 602W)</name>
    <name type="common">Vibrio succinogenes</name>
    <dbReference type="NCBI Taxonomy" id="273121"/>
    <lineage>
        <taxon>Bacteria</taxon>
        <taxon>Pseudomonadati</taxon>
        <taxon>Campylobacterota</taxon>
        <taxon>Epsilonproteobacteria</taxon>
        <taxon>Campylobacterales</taxon>
        <taxon>Helicobacteraceae</taxon>
        <taxon>Wolinella</taxon>
    </lineage>
</organism>
<name>MNMG_WOLSU</name>
<keyword id="KW-0963">Cytoplasm</keyword>
<keyword id="KW-0274">FAD</keyword>
<keyword id="KW-0285">Flavoprotein</keyword>
<keyword id="KW-0520">NAD</keyword>
<keyword id="KW-1185">Reference proteome</keyword>
<keyword id="KW-0819">tRNA processing</keyword>
<feature type="chain" id="PRO_0000117216" description="tRNA uridine 5-carboxymethylaminomethyl modification enzyme MnmG">
    <location>
        <begin position="1"/>
        <end position="625"/>
    </location>
</feature>
<feature type="binding site" evidence="1">
    <location>
        <begin position="10"/>
        <end position="15"/>
    </location>
    <ligand>
        <name>FAD</name>
        <dbReference type="ChEBI" id="CHEBI:57692"/>
    </ligand>
</feature>
<feature type="binding site" evidence="1">
    <location>
        <position position="122"/>
    </location>
    <ligand>
        <name>FAD</name>
        <dbReference type="ChEBI" id="CHEBI:57692"/>
    </ligand>
</feature>
<feature type="binding site" evidence="1">
    <location>
        <position position="177"/>
    </location>
    <ligand>
        <name>FAD</name>
        <dbReference type="ChEBI" id="CHEBI:57692"/>
    </ligand>
</feature>
<feature type="binding site" evidence="1">
    <location>
        <begin position="271"/>
        <end position="285"/>
    </location>
    <ligand>
        <name>NAD(+)</name>
        <dbReference type="ChEBI" id="CHEBI:57540"/>
    </ligand>
</feature>
<feature type="binding site" evidence="1">
    <location>
        <position position="368"/>
    </location>
    <ligand>
        <name>FAD</name>
        <dbReference type="ChEBI" id="CHEBI:57692"/>
    </ligand>
</feature>
<reference key="1">
    <citation type="journal article" date="2003" name="Proc. Natl. Acad. Sci. U.S.A.">
        <title>Complete genome sequence and analysis of Wolinella succinogenes.</title>
        <authorList>
            <person name="Baar C."/>
            <person name="Eppinger M."/>
            <person name="Raddatz G."/>
            <person name="Simon J."/>
            <person name="Lanz C."/>
            <person name="Klimmek O."/>
            <person name="Nandakumar R."/>
            <person name="Gross R."/>
            <person name="Rosinus A."/>
            <person name="Keller H."/>
            <person name="Jagtap P."/>
            <person name="Linke B."/>
            <person name="Meyer F."/>
            <person name="Lederer H."/>
            <person name="Schuster S.C."/>
        </authorList>
    </citation>
    <scope>NUCLEOTIDE SEQUENCE [LARGE SCALE GENOMIC DNA]</scope>
    <source>
        <strain>ATCC 29543 / DSM 1740 / CCUG 13145 / JCM 31913 / LMG 7466 / NCTC 11488 / FDC 602W</strain>
    </source>
</reference>
<evidence type="ECO:0000255" key="1">
    <source>
        <dbReference type="HAMAP-Rule" id="MF_00129"/>
    </source>
</evidence>
<sequence length="625" mass="69223">MRDFDVIVVGGGHAGIEAAHASARMGCKTLLLTILVEQIGAASCNPAIGGLAKGHLVKEIDALGGVMGKVTDLCGLQFRTLNASKGPAVRGTRAQIDMDRYRIMMRNLCLTTPNLTVAQEMVEELIVEEGAVLGVRTQIGREYRSAKVIMTTGTFLNGLVHIGNRTSSNGRVGEPSSIKLSESLRSLGLEVGRLKTGTCARIASESIDFSVMEQHPGDLPPPPFSFSTKKEEFAPTQLPCYVTYTNEKTHEIIRSNFHRAPMFTGQIEGIGPRYCPSIEDKVNRFKERERHQIFVEPQTLEATEYYLNGLTTSMPFDVQEAMIRSMAGLQNARIVRYGYAIEYDYVNPVELKHTLETKKIKNLYLAGQINGTTGYEEAGAQGLAAGINAALSVKGEEPFVLRRDEAYLGVLIDDLVTKGTKEPYRMFTSRAEYRLLLREDNAEFRLLRHGARFGLVEEEALLALQKDEQSIHGGLVHLRESSATPSKETLAFLEEMGEEKINDKTTWLAIAGRKSFDEAKLRKISPLFEEMSERALGQVLIEAKYASYIQKQQESVGSMQEMLKVKIPEGFIFDTVPGLSLEVIEKLKRFNPPTLFAASEISGITPASLDVLHLYIHLRGKESVD</sequence>
<protein>
    <recommendedName>
        <fullName evidence="1">tRNA uridine 5-carboxymethylaminomethyl modification enzyme MnmG</fullName>
    </recommendedName>
    <alternativeName>
        <fullName evidence="1">Glucose-inhibited division protein A</fullName>
    </alternativeName>
</protein>